<sequence length="159" mass="18229">MNITIISVGKIKEKYLEDAVLEYKKRLSRYTKLNIIEISDEKTPENPSDVEKSKILDKEAEGIFKNLKGDFYVVTLEILGKELDSKELAKNINDLSISGKKNIVFVIGGSLGLSQKVSEKSNFKLSFSKMTFPHQLMRVILLEQIYRSFRIINGEPYHK</sequence>
<accession>A6UP47</accession>
<dbReference type="EC" id="2.1.1.177" evidence="1"/>
<dbReference type="EMBL" id="CP000742">
    <property type="protein sequence ID" value="ABR54269.1"/>
    <property type="molecule type" value="Genomic_DNA"/>
</dbReference>
<dbReference type="RefSeq" id="WP_011972172.1">
    <property type="nucleotide sequence ID" value="NC_009634.1"/>
</dbReference>
<dbReference type="SMR" id="A6UP47"/>
<dbReference type="STRING" id="406327.Mevan_0360"/>
<dbReference type="GeneID" id="5325811"/>
<dbReference type="KEGG" id="mvn:Mevan_0360"/>
<dbReference type="eggNOG" id="arCOG05111">
    <property type="taxonomic scope" value="Archaea"/>
</dbReference>
<dbReference type="HOGENOM" id="CLU_100552_0_0_2"/>
<dbReference type="OrthoDB" id="111266at2157"/>
<dbReference type="Proteomes" id="UP000001107">
    <property type="component" value="Chromosome"/>
</dbReference>
<dbReference type="GO" id="GO:0005737">
    <property type="term" value="C:cytoplasm"/>
    <property type="evidence" value="ECO:0007669"/>
    <property type="project" value="UniProtKB-SubCell"/>
</dbReference>
<dbReference type="GO" id="GO:0070038">
    <property type="term" value="F:rRNA (pseudouridine-N3-)-methyltransferase activity"/>
    <property type="evidence" value="ECO:0007669"/>
    <property type="project" value="UniProtKB-UniRule"/>
</dbReference>
<dbReference type="CDD" id="cd18081">
    <property type="entry name" value="RlmH-like"/>
    <property type="match status" value="1"/>
</dbReference>
<dbReference type="Gene3D" id="3.40.1280.10">
    <property type="match status" value="1"/>
</dbReference>
<dbReference type="HAMAP" id="MF_00658">
    <property type="entry name" value="23SrRNA_methyltr_H"/>
    <property type="match status" value="1"/>
</dbReference>
<dbReference type="InterPro" id="IPR029028">
    <property type="entry name" value="Alpha/beta_knot_MTases"/>
</dbReference>
<dbReference type="InterPro" id="IPR003742">
    <property type="entry name" value="RlmH-like"/>
</dbReference>
<dbReference type="InterPro" id="IPR029026">
    <property type="entry name" value="tRNA_m1G_MTases_N"/>
</dbReference>
<dbReference type="NCBIfam" id="NF000985">
    <property type="entry name" value="PRK00103.1-3"/>
    <property type="match status" value="1"/>
</dbReference>
<dbReference type="NCBIfam" id="TIGR00246">
    <property type="entry name" value="tRNA_RlmH_YbeA"/>
    <property type="match status" value="1"/>
</dbReference>
<dbReference type="PANTHER" id="PTHR33603">
    <property type="entry name" value="METHYLTRANSFERASE"/>
    <property type="match status" value="1"/>
</dbReference>
<dbReference type="PANTHER" id="PTHR33603:SF1">
    <property type="entry name" value="RIBOSOMAL RNA LARGE SUBUNIT METHYLTRANSFERASE H"/>
    <property type="match status" value="1"/>
</dbReference>
<dbReference type="Pfam" id="PF02590">
    <property type="entry name" value="SPOUT_MTase"/>
    <property type="match status" value="1"/>
</dbReference>
<dbReference type="PIRSF" id="PIRSF004505">
    <property type="entry name" value="MT_bac"/>
    <property type="match status" value="1"/>
</dbReference>
<dbReference type="SUPFAM" id="SSF75217">
    <property type="entry name" value="alpha/beta knot"/>
    <property type="match status" value="1"/>
</dbReference>
<protein>
    <recommendedName>
        <fullName evidence="1">Putative ribosomal RNA large subunit methyltransferase H</fullName>
        <ecNumber evidence="1">2.1.1.177</ecNumber>
    </recommendedName>
    <alternativeName>
        <fullName evidence="1">23S rRNA (pseudouridine1915-N3)-methyltransferase</fullName>
    </alternativeName>
    <alternativeName>
        <fullName evidence="1">rRNA (pseudouridine-N3-)-methyltransferase RlmH</fullName>
    </alternativeName>
</protein>
<comment type="function">
    <text evidence="1">Specifically methylates the pseudouridine at position 1915 (m3Psi1915) in 23S rRNA.</text>
</comment>
<comment type="catalytic activity">
    <reaction evidence="1">
        <text>pseudouridine(1915) in 23S rRNA + S-adenosyl-L-methionine = N(3)-methylpseudouridine(1915) in 23S rRNA + S-adenosyl-L-homocysteine + H(+)</text>
        <dbReference type="Rhea" id="RHEA:42752"/>
        <dbReference type="Rhea" id="RHEA-COMP:10221"/>
        <dbReference type="Rhea" id="RHEA-COMP:10222"/>
        <dbReference type="ChEBI" id="CHEBI:15378"/>
        <dbReference type="ChEBI" id="CHEBI:57856"/>
        <dbReference type="ChEBI" id="CHEBI:59789"/>
        <dbReference type="ChEBI" id="CHEBI:65314"/>
        <dbReference type="ChEBI" id="CHEBI:74486"/>
        <dbReference type="EC" id="2.1.1.177"/>
    </reaction>
</comment>
<comment type="subcellular location">
    <subcellularLocation>
        <location evidence="1">Cytoplasm</location>
    </subcellularLocation>
</comment>
<comment type="similarity">
    <text evidence="1">Belongs to the RNA methyltransferase RlmH family.</text>
</comment>
<gene>
    <name evidence="1" type="primary">rlmH</name>
    <name type="ordered locus">Mevan_0360</name>
</gene>
<organism>
    <name type="scientific">Methanococcus vannielii (strain ATCC 35089 / DSM 1224 / JCM 13029 / OCM 148 / SB)</name>
    <dbReference type="NCBI Taxonomy" id="406327"/>
    <lineage>
        <taxon>Archaea</taxon>
        <taxon>Methanobacteriati</taxon>
        <taxon>Methanobacteriota</taxon>
        <taxon>Methanomada group</taxon>
        <taxon>Methanococci</taxon>
        <taxon>Methanococcales</taxon>
        <taxon>Methanococcaceae</taxon>
        <taxon>Methanococcus</taxon>
    </lineage>
</organism>
<keyword id="KW-0963">Cytoplasm</keyword>
<keyword id="KW-0489">Methyltransferase</keyword>
<keyword id="KW-0698">rRNA processing</keyword>
<keyword id="KW-0949">S-adenosyl-L-methionine</keyword>
<keyword id="KW-0808">Transferase</keyword>
<name>RLMH_METVS</name>
<evidence type="ECO:0000255" key="1">
    <source>
        <dbReference type="HAMAP-Rule" id="MF_00658"/>
    </source>
</evidence>
<feature type="chain" id="PRO_1000061809" description="Putative ribosomal RNA large subunit methyltransferase H">
    <location>
        <begin position="1"/>
        <end position="159"/>
    </location>
</feature>
<feature type="binding site" evidence="1">
    <location>
        <position position="76"/>
    </location>
    <ligand>
        <name>S-adenosyl-L-methionine</name>
        <dbReference type="ChEBI" id="CHEBI:59789"/>
    </ligand>
</feature>
<feature type="binding site" evidence="1">
    <location>
        <position position="108"/>
    </location>
    <ligand>
        <name>S-adenosyl-L-methionine</name>
        <dbReference type="ChEBI" id="CHEBI:59789"/>
    </ligand>
</feature>
<feature type="binding site" evidence="1">
    <location>
        <begin position="127"/>
        <end position="132"/>
    </location>
    <ligand>
        <name>S-adenosyl-L-methionine</name>
        <dbReference type="ChEBI" id="CHEBI:59789"/>
    </ligand>
</feature>
<reference key="1">
    <citation type="submission" date="2007-06" db="EMBL/GenBank/DDBJ databases">
        <title>Complete sequence of Methanococcus vannielii SB.</title>
        <authorList>
            <consortium name="US DOE Joint Genome Institute"/>
            <person name="Copeland A."/>
            <person name="Lucas S."/>
            <person name="Lapidus A."/>
            <person name="Barry K."/>
            <person name="Glavina del Rio T."/>
            <person name="Dalin E."/>
            <person name="Tice H."/>
            <person name="Pitluck S."/>
            <person name="Chain P."/>
            <person name="Malfatti S."/>
            <person name="Shin M."/>
            <person name="Vergez L."/>
            <person name="Schmutz J."/>
            <person name="Larimer F."/>
            <person name="Land M."/>
            <person name="Hauser L."/>
            <person name="Kyrpides N."/>
            <person name="Anderson I."/>
            <person name="Sieprawska-Lupa M."/>
            <person name="Whitman W.B."/>
            <person name="Richardson P."/>
        </authorList>
    </citation>
    <scope>NUCLEOTIDE SEQUENCE [LARGE SCALE GENOMIC DNA]</scope>
    <source>
        <strain>ATCC 35089 / DSM 1224 / JCM 13029 / OCM 148 / SB</strain>
    </source>
</reference>
<proteinExistence type="inferred from homology"/>